<reference key="1">
    <citation type="journal article" date="2008" name="Nucleic Acids Res.">
        <title>The complete nucleotide sequences of the five genetically distinct plastid genomes of Oenothera, subsection Oenothera: I. Sequence evaluation and plastome evolution.</title>
        <authorList>
            <person name="Greiner S."/>
            <person name="Wang X."/>
            <person name="Rauwolf U."/>
            <person name="Silber M.V."/>
            <person name="Mayer K."/>
            <person name="Meurer J."/>
            <person name="Haberer G."/>
            <person name="Herrmann R.G."/>
        </authorList>
    </citation>
    <scope>NUCLEOTIDE SEQUENCE [LARGE SCALE GENOMIC DNA]</scope>
    <source>
        <strain>cv. Atrovirens</strain>
    </source>
</reference>
<comment type="function">
    <text evidence="1">F(1)F(0) ATP synthase produces ATP from ADP in the presence of a proton or sodium gradient. F-type ATPases consist of two structural domains, F(1) containing the extramembraneous catalytic core and F(0) containing the membrane proton channel, linked together by a central stalk and a peripheral stalk. During catalysis, ATP synthesis in the catalytic domain of F(1) is coupled via a rotary mechanism of the central stalk subunits to proton translocation.</text>
</comment>
<comment type="function">
    <text evidence="1">Key component of the F(0) channel; it plays a direct role in translocation across the membrane. A homomeric c-ring of between 10-14 subunits forms the central stalk rotor element with the F(1) delta and epsilon subunits.</text>
</comment>
<comment type="subunit">
    <text evidence="1">F-type ATPases have 2 components, F(1) - the catalytic core - and F(0) - the membrane proton channel. F(1) has five subunits: alpha(3), beta(3), gamma(1), delta(1), epsilon(1). F(0) has four main subunits: a(1), b(1), b'(1) and c(10-14). The alpha and beta chains form an alternating ring which encloses part of the gamma chain. F(1) is attached to F(0) by a central stalk formed by the gamma and epsilon chains, while a peripheral stalk is formed by the delta, b and b' chains.</text>
</comment>
<comment type="subcellular location">
    <subcellularLocation>
        <location evidence="1">Plastid</location>
        <location evidence="1">Chloroplast thylakoid membrane</location>
        <topology evidence="1">Multi-pass membrane protein</topology>
    </subcellularLocation>
</comment>
<comment type="miscellaneous">
    <text>In plastids the F-type ATPase is also known as CF(1)CF(0).</text>
</comment>
<comment type="similarity">
    <text evidence="1">Belongs to the ATPase C chain family.</text>
</comment>
<organism>
    <name type="scientific">Oenothera parviflora</name>
    <name type="common">Small-flowered evening primrose</name>
    <name type="synonym">Oenothera cruciata</name>
    <dbReference type="NCBI Taxonomy" id="482429"/>
    <lineage>
        <taxon>Eukaryota</taxon>
        <taxon>Viridiplantae</taxon>
        <taxon>Streptophyta</taxon>
        <taxon>Embryophyta</taxon>
        <taxon>Tracheophyta</taxon>
        <taxon>Spermatophyta</taxon>
        <taxon>Magnoliopsida</taxon>
        <taxon>eudicotyledons</taxon>
        <taxon>Gunneridae</taxon>
        <taxon>Pentapetalae</taxon>
        <taxon>rosids</taxon>
        <taxon>malvids</taxon>
        <taxon>Myrtales</taxon>
        <taxon>Onagraceae</taxon>
        <taxon>Onagroideae</taxon>
        <taxon>Onagreae</taxon>
        <taxon>Oenothera</taxon>
    </lineage>
</organism>
<evidence type="ECO:0000255" key="1">
    <source>
        <dbReference type="HAMAP-Rule" id="MF_01396"/>
    </source>
</evidence>
<keyword id="KW-0066">ATP synthesis</keyword>
<keyword id="KW-0138">CF(0)</keyword>
<keyword id="KW-0150">Chloroplast</keyword>
<keyword id="KW-0375">Hydrogen ion transport</keyword>
<keyword id="KW-0406">Ion transport</keyword>
<keyword id="KW-0446">Lipid-binding</keyword>
<keyword id="KW-0472">Membrane</keyword>
<keyword id="KW-0934">Plastid</keyword>
<keyword id="KW-0793">Thylakoid</keyword>
<keyword id="KW-0812">Transmembrane</keyword>
<keyword id="KW-1133">Transmembrane helix</keyword>
<keyword id="KW-0813">Transport</keyword>
<name>ATPH_OENPA</name>
<accession>B0Z5D2</accession>
<feature type="chain" id="PRO_0000362946" description="ATP synthase subunit c, chloroplastic">
    <location>
        <begin position="1"/>
        <end position="81"/>
    </location>
</feature>
<feature type="transmembrane region" description="Helical" evidence="1">
    <location>
        <begin position="7"/>
        <end position="27"/>
    </location>
</feature>
<feature type="transmembrane region" description="Helical" evidence="1">
    <location>
        <begin position="57"/>
        <end position="77"/>
    </location>
</feature>
<feature type="site" description="Reversibly protonated during proton transport" evidence="1">
    <location>
        <position position="61"/>
    </location>
</feature>
<gene>
    <name evidence="1" type="primary">atpH</name>
</gene>
<protein>
    <recommendedName>
        <fullName evidence="1">ATP synthase subunit c, chloroplastic</fullName>
    </recommendedName>
    <alternativeName>
        <fullName evidence="1">ATP synthase F(0) sector subunit c</fullName>
    </alternativeName>
    <alternativeName>
        <fullName evidence="1">ATPase subunit III</fullName>
    </alternativeName>
    <alternativeName>
        <fullName evidence="1">F-type ATPase subunit c</fullName>
        <shortName evidence="1">F-ATPase subunit c</shortName>
    </alternativeName>
    <alternativeName>
        <fullName evidence="1">Lipid-binding protein</fullName>
    </alternativeName>
</protein>
<proteinExistence type="inferred from homology"/>
<dbReference type="EMBL" id="EU262891">
    <property type="protein sequence ID" value="ABX10125.1"/>
    <property type="molecule type" value="Genomic_DNA"/>
</dbReference>
<dbReference type="RefSeq" id="YP_001687455.1">
    <property type="nucleotide sequence ID" value="NC_010362.1"/>
</dbReference>
<dbReference type="SMR" id="B0Z5D2"/>
<dbReference type="GeneID" id="5955411"/>
<dbReference type="GO" id="GO:0009535">
    <property type="term" value="C:chloroplast thylakoid membrane"/>
    <property type="evidence" value="ECO:0007669"/>
    <property type="project" value="UniProtKB-SubCell"/>
</dbReference>
<dbReference type="GO" id="GO:0045259">
    <property type="term" value="C:proton-transporting ATP synthase complex"/>
    <property type="evidence" value="ECO:0007669"/>
    <property type="project" value="UniProtKB-KW"/>
</dbReference>
<dbReference type="GO" id="GO:0033177">
    <property type="term" value="C:proton-transporting two-sector ATPase complex, proton-transporting domain"/>
    <property type="evidence" value="ECO:0007669"/>
    <property type="project" value="InterPro"/>
</dbReference>
<dbReference type="GO" id="GO:0008289">
    <property type="term" value="F:lipid binding"/>
    <property type="evidence" value="ECO:0007669"/>
    <property type="project" value="UniProtKB-KW"/>
</dbReference>
<dbReference type="GO" id="GO:0046933">
    <property type="term" value="F:proton-transporting ATP synthase activity, rotational mechanism"/>
    <property type="evidence" value="ECO:0007669"/>
    <property type="project" value="UniProtKB-UniRule"/>
</dbReference>
<dbReference type="CDD" id="cd18183">
    <property type="entry name" value="ATP-synt_Fo_c_ATPH"/>
    <property type="match status" value="1"/>
</dbReference>
<dbReference type="FunFam" id="1.20.20.10:FF:000001">
    <property type="entry name" value="ATP synthase subunit c, chloroplastic"/>
    <property type="match status" value="1"/>
</dbReference>
<dbReference type="Gene3D" id="1.20.20.10">
    <property type="entry name" value="F1F0 ATP synthase subunit C"/>
    <property type="match status" value="1"/>
</dbReference>
<dbReference type="HAMAP" id="MF_01396">
    <property type="entry name" value="ATP_synth_c_bact"/>
    <property type="match status" value="1"/>
</dbReference>
<dbReference type="InterPro" id="IPR005953">
    <property type="entry name" value="ATP_synth_csu_bac/chlpt"/>
</dbReference>
<dbReference type="InterPro" id="IPR000454">
    <property type="entry name" value="ATP_synth_F0_csu"/>
</dbReference>
<dbReference type="InterPro" id="IPR020537">
    <property type="entry name" value="ATP_synth_F0_csu_DDCD_BS"/>
</dbReference>
<dbReference type="InterPro" id="IPR038662">
    <property type="entry name" value="ATP_synth_F0_csu_sf"/>
</dbReference>
<dbReference type="InterPro" id="IPR002379">
    <property type="entry name" value="ATPase_proteolipid_c-like_dom"/>
</dbReference>
<dbReference type="InterPro" id="IPR035921">
    <property type="entry name" value="F/V-ATP_Csub_sf"/>
</dbReference>
<dbReference type="NCBIfam" id="TIGR01260">
    <property type="entry name" value="ATP_synt_c"/>
    <property type="match status" value="1"/>
</dbReference>
<dbReference type="NCBIfam" id="NF005608">
    <property type="entry name" value="PRK07354.1"/>
    <property type="match status" value="1"/>
</dbReference>
<dbReference type="PANTHER" id="PTHR10031">
    <property type="entry name" value="ATP SYNTHASE LIPID-BINDING PROTEIN, MITOCHONDRIAL"/>
    <property type="match status" value="1"/>
</dbReference>
<dbReference type="PANTHER" id="PTHR10031:SF0">
    <property type="entry name" value="ATPASE PROTEIN 9"/>
    <property type="match status" value="1"/>
</dbReference>
<dbReference type="Pfam" id="PF00137">
    <property type="entry name" value="ATP-synt_C"/>
    <property type="match status" value="1"/>
</dbReference>
<dbReference type="PRINTS" id="PR00124">
    <property type="entry name" value="ATPASEC"/>
</dbReference>
<dbReference type="SUPFAM" id="SSF81333">
    <property type="entry name" value="F1F0 ATP synthase subunit C"/>
    <property type="match status" value="1"/>
</dbReference>
<dbReference type="PROSITE" id="PS00605">
    <property type="entry name" value="ATPASE_C"/>
    <property type="match status" value="1"/>
</dbReference>
<sequence length="81" mass="8004">MNPLISAASVIAAGLAVGLASIGPGIGQGTAAGQAVEGIARQPEAEGKIRGTLLLSLAFMEALTIYGLVVALALLFANPFV</sequence>
<geneLocation type="chloroplast"/>